<reference key="1">
    <citation type="journal article" date="2002" name="EMBO J.">
        <title>A novel type of co-chaperone mediates transmembrane recruitment of DnaK-like chaperones to ribosomes.</title>
        <authorList>
            <person name="Dudek J."/>
            <person name="Volkmer J."/>
            <person name="Bies C."/>
            <person name="Guth S."/>
            <person name="Mueller A."/>
            <person name="Lerner M."/>
            <person name="Feick P."/>
            <person name="Schaefer K.-H."/>
            <person name="Morgenstern E."/>
            <person name="Hennessy F."/>
            <person name="Blatch G.L."/>
            <person name="Janoscheck K."/>
            <person name="Heim N."/>
            <person name="Scholtes P."/>
            <person name="Frien M."/>
            <person name="Nastainczyk W."/>
            <person name="Zimmermann R."/>
        </authorList>
    </citation>
    <scope>PROTEIN SEQUENCE</scope>
    <scope>POSSIBLE FUNCTION</scope>
    <scope>INTERACTION WITH HSPA5</scope>
    <scope>INTERACTION WITH RIBOSOMES</scope>
    <scope>SUBCELLULAR LOCATION</scope>
    <scope>TOPOLOGY</scope>
    <source>
        <tissue>Pancreas</tissue>
    </source>
</reference>
<proteinExistence type="evidence at protein level"/>
<organism>
    <name type="scientific">Canis lupus familiaris</name>
    <name type="common">Dog</name>
    <name type="synonym">Canis familiaris</name>
    <dbReference type="NCBI Taxonomy" id="9615"/>
    <lineage>
        <taxon>Eukaryota</taxon>
        <taxon>Metazoa</taxon>
        <taxon>Chordata</taxon>
        <taxon>Craniata</taxon>
        <taxon>Vertebrata</taxon>
        <taxon>Euteleostomi</taxon>
        <taxon>Mammalia</taxon>
        <taxon>Eutheria</taxon>
        <taxon>Laurasiatheria</taxon>
        <taxon>Carnivora</taxon>
        <taxon>Caniformia</taxon>
        <taxon>Canidae</taxon>
        <taxon>Canis</taxon>
    </lineage>
</organism>
<gene>
    <name type="primary">DNAJC1</name>
</gene>
<sequence>WESGDLELFDLVEEVXLNFY</sequence>
<feature type="chain" id="PRO_0000071041" description="DnaJ homolog subfamily C member 1">
    <location>
        <begin position="1"/>
        <end position="20" status="greater than"/>
    </location>
</feature>
<feature type="topological domain" description="Lumenal" evidence="3">
    <location>
        <begin position="1"/>
        <end position="20" status="greater than"/>
    </location>
</feature>
<feature type="domain" description="J" evidence="2">
    <location>
        <begin position="18"/>
        <end position="20" status="greater than"/>
    </location>
</feature>
<feature type="non-terminal residue">
    <location>
        <position position="20"/>
    </location>
</feature>
<name>DNJC1_CANLF</name>
<dbReference type="FunCoup" id="P82539">
    <property type="interactions" value="1272"/>
</dbReference>
<dbReference type="STRING" id="9615.ENSCAFP00000059380"/>
<dbReference type="PaxDb" id="9612-ENSCAFP00000006171"/>
<dbReference type="eggNOG" id="KOG0724">
    <property type="taxonomic scope" value="Eukaryota"/>
</dbReference>
<dbReference type="InParanoid" id="P82539"/>
<dbReference type="OrthoDB" id="1420887at2759"/>
<dbReference type="Proteomes" id="UP000002254">
    <property type="component" value="Unplaced"/>
</dbReference>
<dbReference type="Proteomes" id="UP000694429">
    <property type="component" value="Unplaced"/>
</dbReference>
<dbReference type="Proteomes" id="UP000694542">
    <property type="component" value="Unplaced"/>
</dbReference>
<dbReference type="Proteomes" id="UP000805418">
    <property type="component" value="Unplaced"/>
</dbReference>
<dbReference type="GO" id="GO:0005789">
    <property type="term" value="C:endoplasmic reticulum membrane"/>
    <property type="evidence" value="ECO:0007669"/>
    <property type="project" value="UniProtKB-SubCell"/>
</dbReference>
<dbReference type="GO" id="GO:0031965">
    <property type="term" value="C:nuclear membrane"/>
    <property type="evidence" value="ECO:0007669"/>
    <property type="project" value="UniProtKB-SubCell"/>
</dbReference>
<dbReference type="GO" id="GO:0003677">
    <property type="term" value="F:DNA binding"/>
    <property type="evidence" value="ECO:0007669"/>
    <property type="project" value="UniProtKB-KW"/>
</dbReference>
<comment type="subunit">
    <text evidence="1 3">Interacts (via SANT 2 domain) with SERPINA3; the interaction delays the formation of the covalent inhibitory complex SERPINA3-chymotrypsin, but does not alter the catalytic activity of SERPINA3. Interacts (via SANT 2 domain) with ITIH4 (via C-terminus); the interaction protects ITIH4 against in vitro cleavage by kallikrein (By similarity). Interacts (via J domain) with HSPA5. Interacts (via cytosolic domain) with ribosomes.</text>
</comment>
<comment type="subcellular location">
    <subcellularLocation>
        <location evidence="3">Endoplasmic reticulum membrane</location>
        <topology evidence="3">Single-pass type I membrane protein</topology>
    </subcellularLocation>
    <subcellularLocation>
        <location evidence="1">Nucleus membrane</location>
        <topology evidence="1">Single-pass type I membrane protein</topology>
    </subcellularLocation>
    <subcellularLocation>
        <location evidence="1">Microsome membrane</location>
        <topology evidence="1">Single-pass type I membrane protein</topology>
    </subcellularLocation>
</comment>
<evidence type="ECO:0000250" key="1"/>
<evidence type="ECO:0000255" key="2">
    <source>
        <dbReference type="PROSITE-ProRule" id="PRU00286"/>
    </source>
</evidence>
<evidence type="ECO:0000269" key="3">
    <source>
    </source>
</evidence>
<protein>
    <recommendedName>
        <fullName>DnaJ homolog subfamily C member 1</fullName>
    </recommendedName>
    <alternativeName>
        <fullName>DnaJ protein homolog MTJ1</fullName>
    </alternativeName>
</protein>
<keyword id="KW-0143">Chaperone</keyword>
<keyword id="KW-0903">Direct protein sequencing</keyword>
<keyword id="KW-0238">DNA-binding</keyword>
<keyword id="KW-0256">Endoplasmic reticulum</keyword>
<keyword id="KW-0472">Membrane</keyword>
<keyword id="KW-0492">Microsome</keyword>
<keyword id="KW-0539">Nucleus</keyword>
<keyword id="KW-1185">Reference proteome</keyword>
<keyword id="KW-0812">Transmembrane</keyword>
<accession>P82539</accession>